<keyword id="KW-0007">Acetylation</keyword>
<keyword id="KW-0025">Alternative splicing</keyword>
<keyword id="KW-0175">Coiled coil</keyword>
<keyword id="KW-0479">Metal-binding</keyword>
<keyword id="KW-0597">Phosphoprotein</keyword>
<keyword id="KW-1185">Reference proteome</keyword>
<keyword id="KW-0677">Repeat</keyword>
<keyword id="KW-0808">Transferase</keyword>
<keyword id="KW-0832">Ubl conjugation</keyword>
<keyword id="KW-0833">Ubl conjugation pathway</keyword>
<keyword id="KW-0862">Zinc</keyword>
<keyword id="KW-0863">Zinc-finger</keyword>
<feature type="chain" id="PRO_0000056297" description="RanBP-type and C3HC4-type zinc finger-containing protein 1">
    <location>
        <begin position="1"/>
        <end position="508"/>
    </location>
</feature>
<feature type="domain" description="Ubiquitin-like" evidence="4">
    <location>
        <begin position="55"/>
        <end position="119"/>
    </location>
</feature>
<feature type="zinc finger region" description="RanBP2-type" evidence="5">
    <location>
        <begin position="188"/>
        <end position="220"/>
    </location>
</feature>
<feature type="zinc finger region" description="RING-type 1" evidence="6">
    <location>
        <begin position="280"/>
        <end position="330"/>
    </location>
</feature>
<feature type="zinc finger region" description="IBR-type" evidence="6">
    <location>
        <begin position="349"/>
        <end position="409"/>
    </location>
</feature>
<feature type="zinc finger region" description="RING-type 2; atypical" evidence="6">
    <location>
        <begin position="445"/>
        <end position="474"/>
    </location>
</feature>
<feature type="region of interest" description="Interaction with TAB2" evidence="1">
    <location>
        <begin position="1"/>
        <end position="268"/>
    </location>
</feature>
<feature type="region of interest" description="Interaction with IRF3" evidence="1">
    <location>
        <begin position="1"/>
        <end position="218"/>
    </location>
</feature>
<feature type="region of interest" description="Interaction with RNF31" evidence="1">
    <location>
        <begin position="69"/>
        <end position="131"/>
    </location>
</feature>
<feature type="region of interest" description="Disordered" evidence="7">
    <location>
        <begin position="161"/>
        <end position="191"/>
    </location>
</feature>
<feature type="region of interest" description="TRIAD supradomain" evidence="6">
    <location>
        <begin position="276"/>
        <end position="504"/>
    </location>
</feature>
<feature type="coiled-coil region" evidence="3">
    <location>
        <begin position="231"/>
        <end position="260"/>
    </location>
</feature>
<feature type="active site" evidence="6">
    <location>
        <position position="458"/>
    </location>
</feature>
<feature type="binding site" evidence="6">
    <location>
        <position position="280"/>
    </location>
    <ligand>
        <name>Zn(2+)</name>
        <dbReference type="ChEBI" id="CHEBI:29105"/>
        <label>1</label>
    </ligand>
</feature>
<feature type="binding site" evidence="6">
    <location>
        <position position="283"/>
    </location>
    <ligand>
        <name>Zn(2+)</name>
        <dbReference type="ChEBI" id="CHEBI:29105"/>
        <label>1</label>
    </ligand>
</feature>
<feature type="binding site" evidence="6">
    <location>
        <position position="298"/>
    </location>
    <ligand>
        <name>Zn(2+)</name>
        <dbReference type="ChEBI" id="CHEBI:29105"/>
        <label>2</label>
    </ligand>
</feature>
<feature type="binding site" evidence="6">
    <location>
        <position position="300"/>
    </location>
    <ligand>
        <name>Zn(2+)</name>
        <dbReference type="ChEBI" id="CHEBI:29105"/>
        <label>2</label>
    </ligand>
</feature>
<feature type="binding site" evidence="6">
    <location>
        <position position="303"/>
    </location>
    <ligand>
        <name>Zn(2+)</name>
        <dbReference type="ChEBI" id="CHEBI:29105"/>
        <label>1</label>
    </ligand>
</feature>
<feature type="binding site" evidence="6">
    <location>
        <position position="306"/>
    </location>
    <ligand>
        <name>Zn(2+)</name>
        <dbReference type="ChEBI" id="CHEBI:29105"/>
        <label>1</label>
    </ligand>
</feature>
<feature type="binding site" evidence="6">
    <location>
        <position position="321"/>
    </location>
    <ligand>
        <name>Zn(2+)</name>
        <dbReference type="ChEBI" id="CHEBI:29105"/>
        <label>2</label>
    </ligand>
</feature>
<feature type="binding site" evidence="6">
    <location>
        <position position="330"/>
    </location>
    <ligand>
        <name>Zn(2+)</name>
        <dbReference type="ChEBI" id="CHEBI:29105"/>
        <label>2</label>
    </ligand>
</feature>
<feature type="binding site" evidence="6">
    <location>
        <position position="369"/>
    </location>
    <ligand>
        <name>Zn(2+)</name>
        <dbReference type="ChEBI" id="CHEBI:29105"/>
        <label>3</label>
    </ligand>
</feature>
<feature type="binding site" evidence="6">
    <location>
        <position position="374"/>
    </location>
    <ligand>
        <name>Zn(2+)</name>
        <dbReference type="ChEBI" id="CHEBI:29105"/>
        <label>3</label>
    </ligand>
</feature>
<feature type="binding site" evidence="6">
    <location>
        <position position="389"/>
    </location>
    <ligand>
        <name>Zn(2+)</name>
        <dbReference type="ChEBI" id="CHEBI:29105"/>
        <label>3</label>
    </ligand>
</feature>
<feature type="binding site" evidence="6">
    <location>
        <position position="392"/>
    </location>
    <ligand>
        <name>Zn(2+)</name>
        <dbReference type="ChEBI" id="CHEBI:29105"/>
        <label>3</label>
    </ligand>
</feature>
<feature type="binding site" evidence="6">
    <location>
        <position position="397"/>
    </location>
    <ligand>
        <name>Zn(2+)</name>
        <dbReference type="ChEBI" id="CHEBI:29105"/>
        <label>4</label>
    </ligand>
</feature>
<feature type="binding site" evidence="6">
    <location>
        <position position="400"/>
    </location>
    <ligand>
        <name>Zn(2+)</name>
        <dbReference type="ChEBI" id="CHEBI:29105"/>
        <label>4</label>
    </ligand>
</feature>
<feature type="binding site" evidence="6">
    <location>
        <position position="404"/>
    </location>
    <ligand>
        <name>Zn(2+)</name>
        <dbReference type="ChEBI" id="CHEBI:29105"/>
        <label>4</label>
    </ligand>
</feature>
<feature type="binding site" evidence="6">
    <location>
        <position position="409"/>
    </location>
    <ligand>
        <name>Zn(2+)</name>
        <dbReference type="ChEBI" id="CHEBI:29105"/>
        <label>4</label>
    </ligand>
</feature>
<feature type="binding site" evidence="6">
    <location>
        <position position="445"/>
    </location>
    <ligand>
        <name>Zn(2+)</name>
        <dbReference type="ChEBI" id="CHEBI:29105"/>
        <label>5</label>
    </ligand>
</feature>
<feature type="binding site" evidence="6">
    <location>
        <position position="448"/>
    </location>
    <ligand>
        <name>Zn(2+)</name>
        <dbReference type="ChEBI" id="CHEBI:29105"/>
        <label>5</label>
    </ligand>
</feature>
<feature type="binding site" evidence="6">
    <location>
        <position position="463"/>
    </location>
    <ligand>
        <name>Zn(2+)</name>
        <dbReference type="ChEBI" id="CHEBI:29105"/>
        <label>5</label>
    </ligand>
</feature>
<feature type="binding site" evidence="6">
    <location>
        <position position="466"/>
    </location>
    <ligand>
        <name>Zn(2+)</name>
        <dbReference type="ChEBI" id="CHEBI:29105"/>
        <label>5</label>
    </ligand>
</feature>
<feature type="modified residue" description="N-acetylmethionine" evidence="1">
    <location>
        <position position="1"/>
    </location>
</feature>
<feature type="modified residue" description="Phosphoserine" evidence="1">
    <location>
        <position position="50"/>
    </location>
</feature>
<feature type="modified residue" description="Phosphotyrosine" evidence="1">
    <location>
        <position position="328"/>
    </location>
</feature>
<feature type="splice variant" id="VSP_005769" description="In isoform 2." evidence="11">
    <original>RKQQQQEGNYLQHVQLEQRS</original>
    <variation>GVPAGYHPKQPGGGGILPLH</variation>
    <location>
        <begin position="251"/>
        <end position="270"/>
    </location>
</feature>
<feature type="splice variant" id="VSP_005770" description="In isoform 2." evidence="11">
    <location>
        <begin position="271"/>
        <end position="508"/>
    </location>
</feature>
<feature type="mutagenesis site" description="Greatly reduces auto-ubiquitination." evidence="8">
    <original>C</original>
    <variation>G</variation>
    <location>
        <position position="303"/>
    </location>
</feature>
<evidence type="ECO:0000250" key="1">
    <source>
        <dbReference type="UniProtKB" id="Q9BYM8"/>
    </source>
</evidence>
<evidence type="ECO:0000250" key="2">
    <source>
        <dbReference type="UniProtKB" id="Q9WUB0"/>
    </source>
</evidence>
<evidence type="ECO:0000255" key="3"/>
<evidence type="ECO:0000255" key="4">
    <source>
        <dbReference type="PROSITE-ProRule" id="PRU00214"/>
    </source>
</evidence>
<evidence type="ECO:0000255" key="5">
    <source>
        <dbReference type="PROSITE-ProRule" id="PRU00322"/>
    </source>
</evidence>
<evidence type="ECO:0000255" key="6">
    <source>
        <dbReference type="PROSITE-ProRule" id="PRU01221"/>
    </source>
</evidence>
<evidence type="ECO:0000256" key="7">
    <source>
        <dbReference type="SAM" id="MobiDB-lite"/>
    </source>
</evidence>
<evidence type="ECO:0000269" key="8">
    <source>
    </source>
</evidence>
<evidence type="ECO:0000269" key="9">
    <source>
    </source>
</evidence>
<evidence type="ECO:0000303" key="10">
    <source>
    </source>
</evidence>
<evidence type="ECO:0000303" key="11">
    <source>
    </source>
</evidence>
<evidence type="ECO:0000305" key="12"/>
<evidence type="ECO:0000305" key="13">
    <source>
    </source>
</evidence>
<protein>
    <recommendedName>
        <fullName>RanBP-type and C3HC4-type zinc finger-containing protein 1</fullName>
        <ecNumber evidence="13">2.3.2.31</ecNumber>
    </recommendedName>
    <alternativeName>
        <fullName>Heme-oxidized IRP2 ubiquitin ligase 1 homolog</fullName>
        <shortName>HOIL-1</shortName>
    </alternativeName>
    <alternativeName>
        <fullName>Protein kinase C-binding protein beta-15</fullName>
    </alternativeName>
    <alternativeName>
        <fullName evidence="10">RBCC protein interacting with PKC</fullName>
    </alternativeName>
    <alternativeName>
        <fullName evidence="12">RING-type E3 ubiquitin transferase HOIL-1</fullName>
    </alternativeName>
    <alternativeName>
        <fullName>Ubiquitin-conjugating enzyme 7-interacting protein 3</fullName>
    </alternativeName>
</protein>
<gene>
    <name type="primary">Rbck1</name>
    <name type="synonym">Pkcbpb15</name>
    <name type="synonym">Rbck</name>
    <name type="synonym">Ubce7ip3</name>
</gene>
<sequence>MDEKTKKAEEMALSLARAVTGGDEQAAIKYATWLAEQKVPLRVQVKPEVSPTQDIRLCVSVEDAYMHTVTIWLTVRPDMTVASLKDMVFLDYGFPPSLQQWVVGQRLARDQETLHSHGIRRNGDSAYLYLLSARNTSLNPQELQRQRQLRMLEDLGFKDLTLQPRGPLEPVLPKPRTHQETGQPDAAPESPPVGWQCPGCTFINKPTRPGCEMCCRARPEAYQIPASYQPDEEERARLAGEEEALRQYEQRKQQQQEGNYLQHVQLEQRSLVLNTEPAECPVCYSVLAPGEAVVLRECLHTFCRECLQGTIRNSQEAEVSCPFIDNTYSCPGKLLEREIRALLSPEDYQRFLDLGVSIAENRSTLSYHCKTPDCRGWCFFEDDVNEFTCPVCTRVNCLLCKAIHERMNCREYQDDLAHRARNDVAAQQTTEMLRVMLQQGEAMYCPQCRIVVQKKDGCDWIRCTVCHTEICWVTKGPRWGPGGPGDTSGGCRCRVNGIPCHPSCQNCH</sequence>
<comment type="function">
    <text evidence="1 8">E3 ubiquitin-protein ligase, which accepts ubiquitin from specific E2 ubiquitin-conjugating enzymes, such as UBE2L3/UBCM4, and then transfers it to substrates (By similarity). Functions as an E3 ligase for oxidized IREB2 and both heme and oxygen are necessary for IREB2 ubiquitination (By similarity). Promotes ubiquitination of TAB2 and IRF3 and their degradation by the proteasome (PubMed:18303026). Component of the LUBAC complex which conjugates linear ('Met-1'-linked) polyubiquitin chains to substrates and plays a key role in NF-kappa-B activation and regulation of inflammation (By similarity). LUBAC conjugates linear polyubiquitin to IKBKG and RIPK1 and is involved in activation of the canonical NF-kappa-B and the JNK signaling pathways (By similarity). Linear ubiquitination mediated by the LUBAC complex interferes with TNF-induced cell death and thereby prevents inflammation (By similarity). LUBAC is recruited to the TNF-R1 signaling complex (TNF-RSC) following polyubiquitination of TNF-RSC components by BIRC2 and/or BIRC3 and to conjugate linear polyubiquitin to IKBKG and possibly other components contributing to the stability of the complex (By similarity). The LUBAC complex is also involved in innate immunity by conjugating linear polyubiquitin chains at the surface of bacteria invading the cytosol to form the ubiquitin coat surrounding bacteria (By similarity). LUBAC is not able to initiate formation of the bacterial ubiquitin coat, and can only promote formation of linear polyubiquitins on pre-existing ubiquitin (By similarity). The bacterial ubiquitin coat acts as an 'eat-me' signal for xenophagy and promotes NF-kappa-B activation (By similarity). Together with OTULIN, the LUBAC complex regulates the canonical Wnt signaling during angiogenesis (By similarity). Binds polyubiquitin of different linkage types (By similarity).</text>
</comment>
<comment type="catalytic activity">
    <reaction evidence="13">
        <text>[E2 ubiquitin-conjugating enzyme]-S-ubiquitinyl-L-cysteine + [acceptor protein]-L-lysine = [E2 ubiquitin-conjugating enzyme]-L-cysteine + [acceptor protein]-N(6)-ubiquitinyl-L-lysine.</text>
        <dbReference type="EC" id="2.3.2.31"/>
    </reaction>
</comment>
<comment type="pathway">
    <text evidence="13">Protein modification; protein ubiquitination.</text>
</comment>
<comment type="subunit">
    <text evidence="1 2 9">Component of the LUBAC complex (linear ubiquitin chain assembly complex) which consists of SHARPIN, RBCK1 and RNF31 (By similarity). LUBAC has a MW of approximately 600 kDa suggesting a heteromultimeric assembly of its subunits (By similarity). Interacts with beta-I-type (PRKCB1) and zeta-type protein kinase C (PRKCZ) (PubMed:9514928). Interacts with UBE2L3 (By similarity). Interacts with IREB2 only in iron-rich conditions (By similarity). Associates with the TNF-R1 signaling complex (TNF-RSC) in a stimulation-dependent manner (By similarity). Interacts with EYA1, TAB2, TAB3, MAP3K7 TRAF6 and RIPK1. Interacts with IRF3 (By similarity).</text>
</comment>
<comment type="interaction">
    <interactant intactId="EBI-7266339">
        <id>Q62921</id>
    </interactant>
    <interactant intactId="EBI-359318">
        <id>P55036</id>
        <label>PSMD4</label>
    </interactant>
    <organismsDiffer>true</organismsDiffer>
    <experiments>3</experiments>
</comment>
<comment type="interaction">
    <interactant intactId="EBI-7266339">
        <id>Q62921</id>
    </interactant>
    <interactant intactId="EBI-3390054">
        <id>P0CG48</id>
        <label>UBC</label>
    </interactant>
    <organismsDiffer>true</organismsDiffer>
    <experiments>2</experiments>
</comment>
<comment type="alternative products">
    <event type="alternative splicing"/>
    <isoform>
        <id>Q62921-1</id>
        <name>1</name>
        <name>RBCK1</name>
        <sequence type="displayed"/>
    </isoform>
    <isoform>
        <id>Q62921-2</id>
        <name>2</name>
        <name>RBCK2</name>
        <sequence type="described" ref="VSP_005769 VSP_005770"/>
    </isoform>
</comment>
<comment type="tissue specificity">
    <text evidence="9">Widely expressed.</text>
</comment>
<comment type="domain">
    <text evidence="2">The RanBP2-type zinc finger, also called Npl4 zinc finger (NZF), mediates binding to 'Met-1'-linked polyubiquitins.</text>
</comment>
<comment type="domain">
    <text evidence="1">The UBL domain mediates association with RNF31 via interaction with its UBA domain.</text>
</comment>
<comment type="PTM">
    <text evidence="8">Auto-ubiquitinated. Auto-ubiquitination leads to degradation by the proteasome.</text>
</comment>
<comment type="PTM">
    <text evidence="8">Phosphorylated. In vitro, phosphorylation inhibits auto-ubiquitination activity.</text>
</comment>
<comment type="similarity">
    <text evidence="12">Belongs to the RBR family.</text>
</comment>
<comment type="sequence caution" evidence="12">
    <conflict type="erroneous initiation">
        <sequence resource="EMBL-CDS" id="AAC72243"/>
    </conflict>
</comment>
<comment type="sequence caution" evidence="12">
    <conflict type="erroneous initiation">
        <sequence resource="EMBL-CDS" id="BAA33957"/>
    </conflict>
</comment>
<organism>
    <name type="scientific">Rattus norvegicus</name>
    <name type="common">Rat</name>
    <dbReference type="NCBI Taxonomy" id="10116"/>
    <lineage>
        <taxon>Eukaryota</taxon>
        <taxon>Metazoa</taxon>
        <taxon>Chordata</taxon>
        <taxon>Craniata</taxon>
        <taxon>Vertebrata</taxon>
        <taxon>Euteleostomi</taxon>
        <taxon>Mammalia</taxon>
        <taxon>Eutheria</taxon>
        <taxon>Euarchontoglires</taxon>
        <taxon>Glires</taxon>
        <taxon>Rodentia</taxon>
        <taxon>Myomorpha</taxon>
        <taxon>Muroidea</taxon>
        <taxon>Muridae</taxon>
        <taxon>Murinae</taxon>
        <taxon>Rattus</taxon>
    </lineage>
</organism>
<name>HOIL1_RAT</name>
<dbReference type="EC" id="2.3.2.31" evidence="13"/>
<dbReference type="EMBL" id="U48248">
    <property type="protein sequence ID" value="AAC72243.1"/>
    <property type="status" value="ALT_INIT"/>
    <property type="molecule type" value="mRNA"/>
</dbReference>
<dbReference type="EMBL" id="AB007133">
    <property type="protein sequence ID" value="BAA33953.1"/>
    <property type="molecule type" value="Genomic_DNA"/>
</dbReference>
<dbReference type="EMBL" id="AB011369">
    <property type="protein sequence ID" value="BAA33957.1"/>
    <property type="status" value="ALT_INIT"/>
    <property type="molecule type" value="mRNA"/>
</dbReference>
<dbReference type="PIR" id="JC5983">
    <property type="entry name" value="JC5983"/>
</dbReference>
<dbReference type="RefSeq" id="NP_068532.2">
    <molecule id="Q62921-1"/>
    <property type="nucleotide sequence ID" value="NM_021764.1"/>
</dbReference>
<dbReference type="SMR" id="Q62921"/>
<dbReference type="BioGRID" id="248810">
    <property type="interactions" value="4"/>
</dbReference>
<dbReference type="FunCoup" id="Q62921">
    <property type="interactions" value="1629"/>
</dbReference>
<dbReference type="IntAct" id="Q62921">
    <property type="interactions" value="2"/>
</dbReference>
<dbReference type="MINT" id="Q62921"/>
<dbReference type="STRING" id="10116.ENSRNOP00000072645"/>
<dbReference type="iPTMnet" id="Q62921"/>
<dbReference type="PhosphoSitePlus" id="Q62921"/>
<dbReference type="PaxDb" id="10116-ENSRNOP00000047637"/>
<dbReference type="GeneID" id="60383"/>
<dbReference type="KEGG" id="rno:60383"/>
<dbReference type="UCSC" id="RGD:708404">
    <molecule id="Q62921-1"/>
    <property type="organism name" value="rat"/>
</dbReference>
<dbReference type="AGR" id="RGD:708404"/>
<dbReference type="CTD" id="10616"/>
<dbReference type="RGD" id="708404">
    <property type="gene designation" value="Rbck1"/>
</dbReference>
<dbReference type="eggNOG" id="KOG1815">
    <property type="taxonomic scope" value="Eukaryota"/>
</dbReference>
<dbReference type="InParanoid" id="Q62921"/>
<dbReference type="OrthoDB" id="261960at2759"/>
<dbReference type="PhylomeDB" id="Q62921"/>
<dbReference type="BRENDA" id="2.3.2.27">
    <property type="organism ID" value="5301"/>
</dbReference>
<dbReference type="Reactome" id="R-RNO-5357786">
    <property type="pathway name" value="TNFR1-induced proapoptotic signaling"/>
</dbReference>
<dbReference type="Reactome" id="R-RNO-5357905">
    <property type="pathway name" value="Regulation of TNFR1 signaling"/>
</dbReference>
<dbReference type="Reactome" id="R-RNO-5357956">
    <property type="pathway name" value="TNFR1-induced NF-kappa-B signaling pathway"/>
</dbReference>
<dbReference type="Reactome" id="R-RNO-983168">
    <property type="pathway name" value="Antigen processing: Ubiquitination &amp; Proteasome degradation"/>
</dbReference>
<dbReference type="UniPathway" id="UPA00143"/>
<dbReference type="PRO" id="PR:Q62921"/>
<dbReference type="Proteomes" id="UP000002494">
    <property type="component" value="Unplaced"/>
</dbReference>
<dbReference type="GO" id="GO:0071797">
    <property type="term" value="C:LUBAC complex"/>
    <property type="evidence" value="ECO:0000250"/>
    <property type="project" value="UniProtKB"/>
</dbReference>
<dbReference type="GO" id="GO:0003690">
    <property type="term" value="F:double-stranded DNA binding"/>
    <property type="evidence" value="ECO:0000314"/>
    <property type="project" value="RGD"/>
</dbReference>
<dbReference type="GO" id="GO:0042802">
    <property type="term" value="F:identical protein binding"/>
    <property type="evidence" value="ECO:0000266"/>
    <property type="project" value="RGD"/>
</dbReference>
<dbReference type="GO" id="GO:0005080">
    <property type="term" value="F:protein kinase C binding"/>
    <property type="evidence" value="ECO:0000353"/>
    <property type="project" value="RGD"/>
</dbReference>
<dbReference type="GO" id="GO:0043130">
    <property type="term" value="F:ubiquitin binding"/>
    <property type="evidence" value="ECO:0000250"/>
    <property type="project" value="UniProtKB"/>
</dbReference>
<dbReference type="GO" id="GO:1990757">
    <property type="term" value="F:ubiquitin ligase activator activity"/>
    <property type="evidence" value="ECO:0000266"/>
    <property type="project" value="RGD"/>
</dbReference>
<dbReference type="GO" id="GO:0004842">
    <property type="term" value="F:ubiquitin-protein transferase activity"/>
    <property type="evidence" value="ECO:0000266"/>
    <property type="project" value="RGD"/>
</dbReference>
<dbReference type="GO" id="GO:0008270">
    <property type="term" value="F:zinc ion binding"/>
    <property type="evidence" value="ECO:0007669"/>
    <property type="project" value="UniProtKB-KW"/>
</dbReference>
<dbReference type="GO" id="GO:0042742">
    <property type="term" value="P:defense response to bacterium"/>
    <property type="evidence" value="ECO:0000250"/>
    <property type="project" value="UniProtKB"/>
</dbReference>
<dbReference type="GO" id="GO:0060546">
    <property type="term" value="P:negative regulation of necroptotic process"/>
    <property type="evidence" value="ECO:0000266"/>
    <property type="project" value="RGD"/>
</dbReference>
<dbReference type="GO" id="GO:0043065">
    <property type="term" value="P:positive regulation of apoptotic process"/>
    <property type="evidence" value="ECO:0000266"/>
    <property type="project" value="RGD"/>
</dbReference>
<dbReference type="GO" id="GO:0043123">
    <property type="term" value="P:positive regulation of canonical NF-kappaB signal transduction"/>
    <property type="evidence" value="ECO:0000250"/>
    <property type="project" value="UniProtKB"/>
</dbReference>
<dbReference type="GO" id="GO:2001238">
    <property type="term" value="P:positive regulation of extrinsic apoptotic signaling pathway"/>
    <property type="evidence" value="ECO:0000266"/>
    <property type="project" value="RGD"/>
</dbReference>
<dbReference type="GO" id="GO:1901224">
    <property type="term" value="P:positive regulation of non-canonical NF-kappaB signal transduction"/>
    <property type="evidence" value="ECO:0000266"/>
    <property type="project" value="RGD"/>
</dbReference>
<dbReference type="GO" id="GO:0045944">
    <property type="term" value="P:positive regulation of transcription by RNA polymerase II"/>
    <property type="evidence" value="ECO:0000314"/>
    <property type="project" value="RGD"/>
</dbReference>
<dbReference type="GO" id="GO:0043161">
    <property type="term" value="P:proteasome-mediated ubiquitin-dependent protein catabolic process"/>
    <property type="evidence" value="ECO:0000266"/>
    <property type="project" value="RGD"/>
</dbReference>
<dbReference type="GO" id="GO:0097039">
    <property type="term" value="P:protein linear polyubiquitination"/>
    <property type="evidence" value="ECO:0000250"/>
    <property type="project" value="UniProtKB"/>
</dbReference>
<dbReference type="GO" id="GO:0000209">
    <property type="term" value="P:protein polyubiquitination"/>
    <property type="evidence" value="ECO:0000266"/>
    <property type="project" value="RGD"/>
</dbReference>
<dbReference type="GO" id="GO:0050852">
    <property type="term" value="P:T cell receptor signaling pathway"/>
    <property type="evidence" value="ECO:0000266"/>
    <property type="project" value="RGD"/>
</dbReference>
<dbReference type="CDD" id="cd20345">
    <property type="entry name" value="BRcat_RBR_HOIL1"/>
    <property type="match status" value="1"/>
</dbReference>
<dbReference type="CDD" id="cd16633">
    <property type="entry name" value="mRING-HC-C3HC3D_RBR_HOIL1"/>
    <property type="match status" value="1"/>
</dbReference>
<dbReference type="CDD" id="cd20358">
    <property type="entry name" value="Rcat_RBR_HOIL1"/>
    <property type="match status" value="1"/>
</dbReference>
<dbReference type="CDD" id="cd01799">
    <property type="entry name" value="Ubl_HOIL1"/>
    <property type="match status" value="1"/>
</dbReference>
<dbReference type="FunFam" id="2.30.30.380:FF:000007">
    <property type="entry name" value="RanBP-type and C3HC4-type zinc finger-containing protein 1"/>
    <property type="match status" value="1"/>
</dbReference>
<dbReference type="FunFam" id="3.10.20.90:FF:000140">
    <property type="entry name" value="RanBP-type and C3HC4-type zinc finger-containing protein 1"/>
    <property type="match status" value="1"/>
</dbReference>
<dbReference type="FunFam" id="3.30.40.10:FF:000137">
    <property type="entry name" value="RanBP-type and C3HC4-type zinc finger-containing protein 1"/>
    <property type="match status" value="1"/>
</dbReference>
<dbReference type="FunFam" id="1.20.120.1750:FF:000012">
    <property type="entry name" value="ranBP-type and C3HC4-type zinc finger-containing protein 1 isoform X1"/>
    <property type="match status" value="1"/>
</dbReference>
<dbReference type="Gene3D" id="1.20.120.1750">
    <property type="match status" value="1"/>
</dbReference>
<dbReference type="Gene3D" id="3.10.20.90">
    <property type="entry name" value="Phosphatidylinositol 3-kinase Catalytic Subunit, Chain A, domain 1"/>
    <property type="match status" value="1"/>
</dbReference>
<dbReference type="Gene3D" id="3.30.40.10">
    <property type="entry name" value="Zinc/RING finger domain, C3HC4 (zinc finger)"/>
    <property type="match status" value="1"/>
</dbReference>
<dbReference type="Gene3D" id="2.30.30.380">
    <property type="entry name" value="Zn-finger domain of Sec23/24"/>
    <property type="match status" value="1"/>
</dbReference>
<dbReference type="InterPro" id="IPR047558">
    <property type="entry name" value="BRcat_RBR_HOIL1"/>
</dbReference>
<dbReference type="InterPro" id="IPR047559">
    <property type="entry name" value="HOIL1_RBR_mRING-HC-C3HC3D"/>
</dbReference>
<dbReference type="InterPro" id="IPR051628">
    <property type="entry name" value="LUBAC_E3_Ligases"/>
</dbReference>
<dbReference type="InterPro" id="IPR047557">
    <property type="entry name" value="Rcat_RBR_HOIL1"/>
</dbReference>
<dbReference type="InterPro" id="IPR044066">
    <property type="entry name" value="TRIAD_supradom"/>
</dbReference>
<dbReference type="InterPro" id="IPR000626">
    <property type="entry name" value="Ubiquitin-like_dom"/>
</dbReference>
<dbReference type="InterPro" id="IPR029071">
    <property type="entry name" value="Ubiquitin-like_domsf"/>
</dbReference>
<dbReference type="InterPro" id="IPR027370">
    <property type="entry name" value="Znf-RING_euk"/>
</dbReference>
<dbReference type="InterPro" id="IPR001876">
    <property type="entry name" value="Znf_RanBP2"/>
</dbReference>
<dbReference type="InterPro" id="IPR036443">
    <property type="entry name" value="Znf_RanBP2_sf"/>
</dbReference>
<dbReference type="InterPro" id="IPR001841">
    <property type="entry name" value="Znf_RING"/>
</dbReference>
<dbReference type="InterPro" id="IPR013083">
    <property type="entry name" value="Znf_RING/FYVE/PHD"/>
</dbReference>
<dbReference type="InterPro" id="IPR017907">
    <property type="entry name" value="Znf_RING_CS"/>
</dbReference>
<dbReference type="PANTHER" id="PTHR22770:SF35">
    <property type="entry name" value="RANBP-TYPE AND C3HC4-TYPE ZINC FINGER-CONTAINING PROTEIN 1"/>
    <property type="match status" value="1"/>
</dbReference>
<dbReference type="PANTHER" id="PTHR22770">
    <property type="entry name" value="UBIQUITIN CONJUGATING ENZYME 7 INTERACTING PROTEIN-RELATED"/>
    <property type="match status" value="1"/>
</dbReference>
<dbReference type="Pfam" id="PF25393">
    <property type="entry name" value="LTM"/>
    <property type="match status" value="1"/>
</dbReference>
<dbReference type="Pfam" id="PF13445">
    <property type="entry name" value="zf-RING_UBOX"/>
    <property type="match status" value="1"/>
</dbReference>
<dbReference type="SMART" id="SM00184">
    <property type="entry name" value="RING"/>
    <property type="match status" value="1"/>
</dbReference>
<dbReference type="SMART" id="SM00547">
    <property type="entry name" value="ZnF_RBZ"/>
    <property type="match status" value="1"/>
</dbReference>
<dbReference type="SUPFAM" id="SSF90209">
    <property type="entry name" value="Ran binding protein zinc finger-like"/>
    <property type="match status" value="1"/>
</dbReference>
<dbReference type="SUPFAM" id="SSF57850">
    <property type="entry name" value="RING/U-box"/>
    <property type="match status" value="3"/>
</dbReference>
<dbReference type="SUPFAM" id="SSF54236">
    <property type="entry name" value="Ubiquitin-like"/>
    <property type="match status" value="1"/>
</dbReference>
<dbReference type="PROSITE" id="PS51873">
    <property type="entry name" value="TRIAD"/>
    <property type="match status" value="1"/>
</dbReference>
<dbReference type="PROSITE" id="PS50053">
    <property type="entry name" value="UBIQUITIN_2"/>
    <property type="match status" value="1"/>
</dbReference>
<dbReference type="PROSITE" id="PS01358">
    <property type="entry name" value="ZF_RANBP2_1"/>
    <property type="match status" value="1"/>
</dbReference>
<dbReference type="PROSITE" id="PS50199">
    <property type="entry name" value="ZF_RANBP2_2"/>
    <property type="match status" value="1"/>
</dbReference>
<dbReference type="PROSITE" id="PS00518">
    <property type="entry name" value="ZF_RING_1"/>
    <property type="match status" value="1"/>
</dbReference>
<dbReference type="PROSITE" id="PS50089">
    <property type="entry name" value="ZF_RING_2"/>
    <property type="match status" value="1"/>
</dbReference>
<proteinExistence type="evidence at protein level"/>
<accession>Q62921</accession>
<accession>Q9QWN4</accession>
<accession>Q9Z334</accession>
<reference key="1">
    <citation type="journal article" date="1998" name="Biochem. Biophys. Res. Commun.">
        <title>Molecular cloning and characterization of a novel protein kinase C-interacting protein with structural motifs related to RBCC family proteins.</title>
        <authorList>
            <person name="Tokunaga C."/>
            <person name="Kuroda S.I."/>
            <person name="Tatematsu K."/>
            <person name="Nakagawa N."/>
            <person name="Ono Y."/>
            <person name="Kikkawa U."/>
        </authorList>
    </citation>
    <scope>NUCLEOTIDE SEQUENCE [MRNA] (ISOFORM 1)</scope>
    <scope>INTERACTION WITH PRKCB1 AND PRKCZ</scope>
    <scope>TISSUE SPECIFICITY</scope>
    <source>
        <strain>Sprague-Dawley</strain>
        <tissue>Brain</tissue>
    </source>
</reference>
<reference key="2">
    <citation type="journal article" date="1998" name="FEBS Lett.">
        <title>Molecular cloning and characterization of RBCK2, a splicing variant of a RBCC family protein, RBCK1.</title>
        <authorList>
            <person name="Tokunaga C."/>
            <person name="Takematsu K."/>
            <person name="Kuroda S.I."/>
            <person name="Nakagawa N."/>
            <person name="Kikkawa U."/>
        </authorList>
    </citation>
    <scope>NUCLEOTIDE SEQUENCE [GENOMIC DNA / MRNA] (ISOFORM 2)</scope>
    <source>
        <tissue>Brain</tissue>
    </source>
</reference>
<reference key="3">
    <citation type="journal article" date="2008" name="J. Biol. Chem.">
        <title>Identification of ubiquitin ligase activity of RBCK1 and its inhibition by splice variant RBCK2 and protein kinase Cbeta.</title>
        <authorList>
            <person name="Tatematsu K."/>
            <person name="Yoshimoto N."/>
            <person name="Okajima T."/>
            <person name="Tanizawa K."/>
            <person name="Kuroda S."/>
        </authorList>
    </citation>
    <scope>FUNCTION</scope>
    <scope>AUTOUBIQUITINATION</scope>
    <scope>PHOSPHORYLATION</scope>
    <scope>RING-TYPE ZINC FINGERS</scope>
    <scope>MUTAGENESIS OF CYS-303</scope>
</reference>